<gene>
    <name evidence="1" type="primary">queA</name>
    <name type="ordered locus">DR_1577</name>
</gene>
<comment type="function">
    <text evidence="1">Transfers and isomerizes the ribose moiety from AdoMet to the 7-aminomethyl group of 7-deazaguanine (preQ1-tRNA) to give epoxyqueuosine (oQ-tRNA).</text>
</comment>
<comment type="catalytic activity">
    <reaction evidence="1">
        <text>7-aminomethyl-7-carbaguanosine(34) in tRNA + S-adenosyl-L-methionine = epoxyqueuosine(34) in tRNA + adenine + L-methionine + 2 H(+)</text>
        <dbReference type="Rhea" id="RHEA:32155"/>
        <dbReference type="Rhea" id="RHEA-COMP:10342"/>
        <dbReference type="Rhea" id="RHEA-COMP:18582"/>
        <dbReference type="ChEBI" id="CHEBI:15378"/>
        <dbReference type="ChEBI" id="CHEBI:16708"/>
        <dbReference type="ChEBI" id="CHEBI:57844"/>
        <dbReference type="ChEBI" id="CHEBI:59789"/>
        <dbReference type="ChEBI" id="CHEBI:82833"/>
        <dbReference type="ChEBI" id="CHEBI:194443"/>
        <dbReference type="EC" id="2.4.99.17"/>
    </reaction>
</comment>
<comment type="pathway">
    <text evidence="1">tRNA modification; tRNA-queuosine biosynthesis.</text>
</comment>
<comment type="subunit">
    <text evidence="1">Monomer.</text>
</comment>
<comment type="subcellular location">
    <subcellularLocation>
        <location evidence="1">Cytoplasm</location>
    </subcellularLocation>
</comment>
<comment type="similarity">
    <text evidence="1">Belongs to the QueA family.</text>
</comment>
<organism>
    <name type="scientific">Deinococcus radiodurans (strain ATCC 13939 / DSM 20539 / JCM 16871 / CCUG 27074 / LMG 4051 / NBRC 15346 / NCIMB 9279 / VKM B-1422 / R1)</name>
    <dbReference type="NCBI Taxonomy" id="243230"/>
    <lineage>
        <taxon>Bacteria</taxon>
        <taxon>Thermotogati</taxon>
        <taxon>Deinococcota</taxon>
        <taxon>Deinococci</taxon>
        <taxon>Deinococcales</taxon>
        <taxon>Deinococcaceae</taxon>
        <taxon>Deinococcus</taxon>
    </lineage>
</organism>
<protein>
    <recommendedName>
        <fullName evidence="1">S-adenosylmethionine:tRNA ribosyltransferase-isomerase</fullName>
        <ecNumber evidence="1">2.4.99.17</ecNumber>
    </recommendedName>
    <alternativeName>
        <fullName evidence="1">Queuosine biosynthesis protein QueA</fullName>
    </alternativeName>
</protein>
<evidence type="ECO:0000255" key="1">
    <source>
        <dbReference type="HAMAP-Rule" id="MF_00113"/>
    </source>
</evidence>
<dbReference type="EC" id="2.4.99.17" evidence="1"/>
<dbReference type="EMBL" id="AE000513">
    <property type="protein sequence ID" value="AAF11138.1"/>
    <property type="molecule type" value="Genomic_DNA"/>
</dbReference>
<dbReference type="PIR" id="F75379">
    <property type="entry name" value="F75379"/>
</dbReference>
<dbReference type="RefSeq" id="NP_295300.1">
    <property type="nucleotide sequence ID" value="NC_001263.1"/>
</dbReference>
<dbReference type="RefSeq" id="WP_010888216.1">
    <property type="nucleotide sequence ID" value="NC_001263.1"/>
</dbReference>
<dbReference type="SMR" id="Q9RU19"/>
<dbReference type="FunCoup" id="Q9RU19">
    <property type="interactions" value="284"/>
</dbReference>
<dbReference type="STRING" id="243230.DR_1577"/>
<dbReference type="PaxDb" id="243230-DR_1577"/>
<dbReference type="EnsemblBacteria" id="AAF11138">
    <property type="protein sequence ID" value="AAF11138"/>
    <property type="gene ID" value="DR_1577"/>
</dbReference>
<dbReference type="GeneID" id="69517815"/>
<dbReference type="KEGG" id="dra:DR_1577"/>
<dbReference type="PATRIC" id="fig|243230.17.peg.1780"/>
<dbReference type="eggNOG" id="COG0809">
    <property type="taxonomic scope" value="Bacteria"/>
</dbReference>
<dbReference type="HOGENOM" id="CLU_039110_1_1_0"/>
<dbReference type="InParanoid" id="Q9RU19"/>
<dbReference type="OrthoDB" id="9805933at2"/>
<dbReference type="UniPathway" id="UPA00392"/>
<dbReference type="Proteomes" id="UP000002524">
    <property type="component" value="Chromosome 1"/>
</dbReference>
<dbReference type="GO" id="GO:0005737">
    <property type="term" value="C:cytoplasm"/>
    <property type="evidence" value="ECO:0007669"/>
    <property type="project" value="UniProtKB-SubCell"/>
</dbReference>
<dbReference type="GO" id="GO:0051075">
    <property type="term" value="F:S-adenosylmethionine:tRNA ribosyltransferase-isomerase activity"/>
    <property type="evidence" value="ECO:0000318"/>
    <property type="project" value="GO_Central"/>
</dbReference>
<dbReference type="GO" id="GO:0008616">
    <property type="term" value="P:queuosine biosynthetic process"/>
    <property type="evidence" value="ECO:0000318"/>
    <property type="project" value="GO_Central"/>
</dbReference>
<dbReference type="GO" id="GO:0002099">
    <property type="term" value="P:tRNA wobble guanine modification"/>
    <property type="evidence" value="ECO:0000318"/>
    <property type="project" value="GO_Central"/>
</dbReference>
<dbReference type="FunFam" id="2.40.10.240:FF:000002">
    <property type="entry name" value="S-adenosylmethionine:tRNA ribosyltransferase-isomerase"/>
    <property type="match status" value="1"/>
</dbReference>
<dbReference type="Gene3D" id="2.40.10.240">
    <property type="entry name" value="QueA-like"/>
    <property type="match status" value="1"/>
</dbReference>
<dbReference type="Gene3D" id="3.40.1780.10">
    <property type="entry name" value="QueA-like"/>
    <property type="match status" value="1"/>
</dbReference>
<dbReference type="HAMAP" id="MF_00113">
    <property type="entry name" value="QueA"/>
    <property type="match status" value="1"/>
</dbReference>
<dbReference type="InterPro" id="IPR003699">
    <property type="entry name" value="QueA"/>
</dbReference>
<dbReference type="InterPro" id="IPR042118">
    <property type="entry name" value="QueA_dom1"/>
</dbReference>
<dbReference type="InterPro" id="IPR042119">
    <property type="entry name" value="QueA_dom2"/>
</dbReference>
<dbReference type="InterPro" id="IPR036100">
    <property type="entry name" value="QueA_sf"/>
</dbReference>
<dbReference type="NCBIfam" id="NF001140">
    <property type="entry name" value="PRK00147.1"/>
    <property type="match status" value="1"/>
</dbReference>
<dbReference type="NCBIfam" id="TIGR00113">
    <property type="entry name" value="queA"/>
    <property type="match status" value="1"/>
</dbReference>
<dbReference type="PANTHER" id="PTHR30307">
    <property type="entry name" value="S-ADENOSYLMETHIONINE:TRNA RIBOSYLTRANSFERASE-ISOMERASE"/>
    <property type="match status" value="1"/>
</dbReference>
<dbReference type="PANTHER" id="PTHR30307:SF0">
    <property type="entry name" value="S-ADENOSYLMETHIONINE:TRNA RIBOSYLTRANSFERASE-ISOMERASE"/>
    <property type="match status" value="1"/>
</dbReference>
<dbReference type="Pfam" id="PF02547">
    <property type="entry name" value="Queuosine_synth"/>
    <property type="match status" value="1"/>
</dbReference>
<dbReference type="SUPFAM" id="SSF111337">
    <property type="entry name" value="QueA-like"/>
    <property type="match status" value="1"/>
</dbReference>
<accession>Q9RU19</accession>
<sequence length="362" mass="39562">MPDSTADPSTADEVLARLHFDLPEDRIAQTGAEPRDTSRLMVVGEQIKHRMFRDLPDLLRPSDLLVFNESRVIPARVLARKPVVNGFGGGQVEVLLLREEFDVGANVWSAYLKPAKRAGHELWLGENEATGHRAEVVGVLDDGARLLRFDHDIKPHLDEIGRLPLPPYINAGDSDETWRERYQTVYAKTPGSVAAPTAGLHFTPELLARLDEMGVERASVTLHVGAGTFKPIQGPVADHVMHAERYEVSETNAAAITRAKAEGRRVVAVGTTTVRTLESAWDGAAVRAGAGETRIFITPGTRVEVPDLLITNLHLPGSTLLLLVAAFAGEDRIRAAYDAALSQDYRFYSLGDAMLLERLTSA</sequence>
<name>QUEA_DEIRA</name>
<keyword id="KW-0963">Cytoplasm</keyword>
<keyword id="KW-0671">Queuosine biosynthesis</keyword>
<keyword id="KW-1185">Reference proteome</keyword>
<keyword id="KW-0949">S-adenosyl-L-methionine</keyword>
<keyword id="KW-0808">Transferase</keyword>
<feature type="chain" id="PRO_0000165399" description="S-adenosylmethionine:tRNA ribosyltransferase-isomerase">
    <location>
        <begin position="1"/>
        <end position="362"/>
    </location>
</feature>
<reference key="1">
    <citation type="journal article" date="1999" name="Science">
        <title>Genome sequence of the radioresistant bacterium Deinococcus radiodurans R1.</title>
        <authorList>
            <person name="White O."/>
            <person name="Eisen J.A."/>
            <person name="Heidelberg J.F."/>
            <person name="Hickey E.K."/>
            <person name="Peterson J.D."/>
            <person name="Dodson R.J."/>
            <person name="Haft D.H."/>
            <person name="Gwinn M.L."/>
            <person name="Nelson W.C."/>
            <person name="Richardson D.L."/>
            <person name="Moffat K.S."/>
            <person name="Qin H."/>
            <person name="Jiang L."/>
            <person name="Pamphile W."/>
            <person name="Crosby M."/>
            <person name="Shen M."/>
            <person name="Vamathevan J.J."/>
            <person name="Lam P."/>
            <person name="McDonald L.A."/>
            <person name="Utterback T.R."/>
            <person name="Zalewski C."/>
            <person name="Makarova K.S."/>
            <person name="Aravind L."/>
            <person name="Daly M.J."/>
            <person name="Minton K.W."/>
            <person name="Fleischmann R.D."/>
            <person name="Ketchum K.A."/>
            <person name="Nelson K.E."/>
            <person name="Salzberg S.L."/>
            <person name="Smith H.O."/>
            <person name="Venter J.C."/>
            <person name="Fraser C.M."/>
        </authorList>
    </citation>
    <scope>NUCLEOTIDE SEQUENCE [LARGE SCALE GENOMIC DNA]</scope>
    <source>
        <strain>ATCC 13939 / DSM 20539 / JCM 16871 / CCUG 27074 / LMG 4051 / NBRC 15346 / NCIMB 9279 / VKM B-1422 / R1</strain>
    </source>
</reference>
<proteinExistence type="inferred from homology"/>